<organism>
    <name type="scientific">Ehrlichia ruminantium (strain Welgevonden)</name>
    <dbReference type="NCBI Taxonomy" id="254945"/>
    <lineage>
        <taxon>Bacteria</taxon>
        <taxon>Pseudomonadati</taxon>
        <taxon>Pseudomonadota</taxon>
        <taxon>Alphaproteobacteria</taxon>
        <taxon>Rickettsiales</taxon>
        <taxon>Anaplasmataceae</taxon>
        <taxon>Ehrlichia</taxon>
    </lineage>
</organism>
<keyword id="KW-0687">Ribonucleoprotein</keyword>
<keyword id="KW-0689">Ribosomal protein</keyword>
<feature type="chain" id="PRO_0000243806" description="Small ribosomal subunit protein bS16">
    <location>
        <begin position="1"/>
        <end position="87"/>
    </location>
</feature>
<dbReference type="EMBL" id="CR767821">
    <property type="protein sequence ID" value="CAH57848.1"/>
    <property type="molecule type" value="Genomic_DNA"/>
</dbReference>
<dbReference type="EMBL" id="CR925678">
    <property type="protein sequence ID" value="CAI26622.1"/>
    <property type="molecule type" value="Genomic_DNA"/>
</dbReference>
<dbReference type="RefSeq" id="WP_011154816.1">
    <property type="nucleotide sequence ID" value="NC_005295.2"/>
</dbReference>
<dbReference type="SMR" id="Q5HC44"/>
<dbReference type="GeneID" id="33057604"/>
<dbReference type="KEGG" id="eru:Erum1320"/>
<dbReference type="KEGG" id="erw:ERWE_CDS_01280"/>
<dbReference type="eggNOG" id="COG0228">
    <property type="taxonomic scope" value="Bacteria"/>
</dbReference>
<dbReference type="HOGENOM" id="CLU_100590_5_0_5"/>
<dbReference type="Proteomes" id="UP000001021">
    <property type="component" value="Chromosome"/>
</dbReference>
<dbReference type="GO" id="GO:0005737">
    <property type="term" value="C:cytoplasm"/>
    <property type="evidence" value="ECO:0007669"/>
    <property type="project" value="UniProtKB-ARBA"/>
</dbReference>
<dbReference type="GO" id="GO:0015935">
    <property type="term" value="C:small ribosomal subunit"/>
    <property type="evidence" value="ECO:0007669"/>
    <property type="project" value="TreeGrafter"/>
</dbReference>
<dbReference type="GO" id="GO:0003735">
    <property type="term" value="F:structural constituent of ribosome"/>
    <property type="evidence" value="ECO:0007669"/>
    <property type="project" value="InterPro"/>
</dbReference>
<dbReference type="GO" id="GO:0006412">
    <property type="term" value="P:translation"/>
    <property type="evidence" value="ECO:0007669"/>
    <property type="project" value="UniProtKB-UniRule"/>
</dbReference>
<dbReference type="Gene3D" id="3.30.1320.10">
    <property type="match status" value="1"/>
</dbReference>
<dbReference type="HAMAP" id="MF_00385">
    <property type="entry name" value="Ribosomal_bS16"/>
    <property type="match status" value="1"/>
</dbReference>
<dbReference type="InterPro" id="IPR000307">
    <property type="entry name" value="Ribosomal_bS16"/>
</dbReference>
<dbReference type="InterPro" id="IPR020592">
    <property type="entry name" value="Ribosomal_bS16_CS"/>
</dbReference>
<dbReference type="InterPro" id="IPR023803">
    <property type="entry name" value="Ribosomal_bS16_dom_sf"/>
</dbReference>
<dbReference type="NCBIfam" id="TIGR00002">
    <property type="entry name" value="S16"/>
    <property type="match status" value="1"/>
</dbReference>
<dbReference type="PANTHER" id="PTHR12919">
    <property type="entry name" value="30S RIBOSOMAL PROTEIN S16"/>
    <property type="match status" value="1"/>
</dbReference>
<dbReference type="PANTHER" id="PTHR12919:SF20">
    <property type="entry name" value="SMALL RIBOSOMAL SUBUNIT PROTEIN BS16M"/>
    <property type="match status" value="1"/>
</dbReference>
<dbReference type="Pfam" id="PF00886">
    <property type="entry name" value="Ribosomal_S16"/>
    <property type="match status" value="1"/>
</dbReference>
<dbReference type="SUPFAM" id="SSF54565">
    <property type="entry name" value="Ribosomal protein S16"/>
    <property type="match status" value="1"/>
</dbReference>
<dbReference type="PROSITE" id="PS00732">
    <property type="entry name" value="RIBOSOMAL_S16"/>
    <property type="match status" value="1"/>
</dbReference>
<gene>
    <name evidence="1" type="primary">rpsP</name>
    <name type="ordered locus">Erum1320</name>
    <name type="ordered locus">ERWE_CDS_01280</name>
</gene>
<evidence type="ECO:0000255" key="1">
    <source>
        <dbReference type="HAMAP-Rule" id="MF_00385"/>
    </source>
</evidence>
<evidence type="ECO:0000305" key="2"/>
<proteinExistence type="inferred from homology"/>
<name>RS16_EHRRW</name>
<sequence length="87" mass="10083">MSVKIRLARFGAKKRPFYRVVVADSRVARDGRFIELLGFYNPMLPKEHPSFLKVKVDRLKYWLSVGAQPTERISWFIKKGLISTEAA</sequence>
<accession>Q5HC44</accession>
<accession>Q5FCR2</accession>
<protein>
    <recommendedName>
        <fullName evidence="1">Small ribosomal subunit protein bS16</fullName>
    </recommendedName>
    <alternativeName>
        <fullName evidence="2">30S ribosomal protein S16</fullName>
    </alternativeName>
</protein>
<comment type="similarity">
    <text evidence="1">Belongs to the bacterial ribosomal protein bS16 family.</text>
</comment>
<reference key="1">
    <citation type="journal article" date="2005" name="Proc. Natl. Acad. Sci. U.S.A.">
        <title>The genome of the heartwater agent Ehrlichia ruminantium contains multiple tandem repeats of actively variable copy number.</title>
        <authorList>
            <person name="Collins N.E."/>
            <person name="Liebenberg J."/>
            <person name="de Villiers E.P."/>
            <person name="Brayton K.A."/>
            <person name="Louw E."/>
            <person name="Pretorius A."/>
            <person name="Faber F.E."/>
            <person name="van Heerden H."/>
            <person name="Josemans A."/>
            <person name="van Kleef M."/>
            <person name="Steyn H.C."/>
            <person name="van Strijp M.F."/>
            <person name="Zweygarth E."/>
            <person name="Jongejan F."/>
            <person name="Maillard J.C."/>
            <person name="Berthier D."/>
            <person name="Botha M."/>
            <person name="Joubert F."/>
            <person name="Corton C.H."/>
            <person name="Thomson N.R."/>
            <person name="Allsopp M.T."/>
            <person name="Allsopp B.A."/>
        </authorList>
    </citation>
    <scope>NUCLEOTIDE SEQUENCE [LARGE SCALE GENOMIC DNA]</scope>
    <source>
        <strain>Welgevonden</strain>
    </source>
</reference>
<reference key="2">
    <citation type="journal article" date="2006" name="J. Bacteriol.">
        <title>Comparative genomic analysis of three strains of Ehrlichia ruminantium reveals an active process of genome size plasticity.</title>
        <authorList>
            <person name="Frutos R."/>
            <person name="Viari A."/>
            <person name="Ferraz C."/>
            <person name="Morgat A."/>
            <person name="Eychenie S."/>
            <person name="Kandassamy Y."/>
            <person name="Chantal I."/>
            <person name="Bensaid A."/>
            <person name="Coissac E."/>
            <person name="Vachiery N."/>
            <person name="Demaille J."/>
            <person name="Martinez D."/>
        </authorList>
    </citation>
    <scope>NUCLEOTIDE SEQUENCE [LARGE SCALE GENOMIC DNA]</scope>
    <source>
        <strain>Welgevonden</strain>
    </source>
</reference>